<reference key="1">
    <citation type="journal article" date="2005" name="J. Bacteriol.">
        <title>Whole-genome sequence analysis of Pseudomonas syringae pv. phaseolicola 1448A reveals divergence among pathovars in genes involved in virulence and transposition.</title>
        <authorList>
            <person name="Joardar V."/>
            <person name="Lindeberg M."/>
            <person name="Jackson R.W."/>
            <person name="Selengut J."/>
            <person name="Dodson R."/>
            <person name="Brinkac L.M."/>
            <person name="Daugherty S.C."/>
            <person name="DeBoy R.T."/>
            <person name="Durkin A.S."/>
            <person name="Gwinn Giglio M."/>
            <person name="Madupu R."/>
            <person name="Nelson W.C."/>
            <person name="Rosovitz M.J."/>
            <person name="Sullivan S.A."/>
            <person name="Crabtree J."/>
            <person name="Creasy T."/>
            <person name="Davidsen T.M."/>
            <person name="Haft D.H."/>
            <person name="Zafar N."/>
            <person name="Zhou L."/>
            <person name="Halpin R."/>
            <person name="Holley T."/>
            <person name="Khouri H.M."/>
            <person name="Feldblyum T.V."/>
            <person name="White O."/>
            <person name="Fraser C.M."/>
            <person name="Chatterjee A.K."/>
            <person name="Cartinhour S."/>
            <person name="Schneider D."/>
            <person name="Mansfield J.W."/>
            <person name="Collmer A."/>
            <person name="Buell R."/>
        </authorList>
    </citation>
    <scope>NUCLEOTIDE SEQUENCE [LARGE SCALE GENOMIC DNA]</scope>
    <source>
        <strain>1448A / Race 6</strain>
    </source>
</reference>
<keyword id="KW-0687">Ribonucleoprotein</keyword>
<keyword id="KW-0689">Ribosomal protein</keyword>
<feature type="chain" id="PRO_0000267917" description="Large ribosomal subunit protein bL17">
    <location>
        <begin position="1"/>
        <end position="128"/>
    </location>
</feature>
<sequence>MRHRKSGRHLSRTSSHRKAMFQNMAVSLFEHELIKTTLPKAKELRRVAEPLITLAKEDSVANRRLAFDRTRSKEIVGKLFNDLGKRYATRQGGYLRILKCGFRAGDNAPMAYVELVDRPVGGSVEPAE</sequence>
<name>RL17_PSE14</name>
<gene>
    <name evidence="1" type="primary">rplQ</name>
    <name type="ordered locus">PSPPH_4566</name>
</gene>
<protein>
    <recommendedName>
        <fullName evidence="1">Large ribosomal subunit protein bL17</fullName>
    </recommendedName>
    <alternativeName>
        <fullName evidence="2">50S ribosomal protein L17</fullName>
    </alternativeName>
</protein>
<accession>Q48D62</accession>
<organism>
    <name type="scientific">Pseudomonas savastanoi pv. phaseolicola (strain 1448A / Race 6)</name>
    <name type="common">Pseudomonas syringae pv. phaseolicola (strain 1448A / Race 6)</name>
    <dbReference type="NCBI Taxonomy" id="264730"/>
    <lineage>
        <taxon>Bacteria</taxon>
        <taxon>Pseudomonadati</taxon>
        <taxon>Pseudomonadota</taxon>
        <taxon>Gammaproteobacteria</taxon>
        <taxon>Pseudomonadales</taxon>
        <taxon>Pseudomonadaceae</taxon>
        <taxon>Pseudomonas</taxon>
    </lineage>
</organism>
<dbReference type="EMBL" id="CP000058">
    <property type="protein sequence ID" value="AAZ37617.1"/>
    <property type="molecule type" value="Genomic_DNA"/>
</dbReference>
<dbReference type="RefSeq" id="WP_011169626.1">
    <property type="nucleotide sequence ID" value="NC_005773.3"/>
</dbReference>
<dbReference type="SMR" id="Q48D62"/>
<dbReference type="KEGG" id="psp:PSPPH_4566"/>
<dbReference type="eggNOG" id="COG0203">
    <property type="taxonomic scope" value="Bacteria"/>
</dbReference>
<dbReference type="HOGENOM" id="CLU_074407_2_0_6"/>
<dbReference type="Proteomes" id="UP000000551">
    <property type="component" value="Chromosome"/>
</dbReference>
<dbReference type="GO" id="GO:0022625">
    <property type="term" value="C:cytosolic large ribosomal subunit"/>
    <property type="evidence" value="ECO:0007669"/>
    <property type="project" value="TreeGrafter"/>
</dbReference>
<dbReference type="GO" id="GO:0003735">
    <property type="term" value="F:structural constituent of ribosome"/>
    <property type="evidence" value="ECO:0007669"/>
    <property type="project" value="InterPro"/>
</dbReference>
<dbReference type="GO" id="GO:0006412">
    <property type="term" value="P:translation"/>
    <property type="evidence" value="ECO:0007669"/>
    <property type="project" value="UniProtKB-UniRule"/>
</dbReference>
<dbReference type="FunFam" id="3.90.1030.10:FF:000001">
    <property type="entry name" value="50S ribosomal protein L17"/>
    <property type="match status" value="1"/>
</dbReference>
<dbReference type="Gene3D" id="3.90.1030.10">
    <property type="entry name" value="Ribosomal protein L17"/>
    <property type="match status" value="1"/>
</dbReference>
<dbReference type="HAMAP" id="MF_01368">
    <property type="entry name" value="Ribosomal_bL17"/>
    <property type="match status" value="1"/>
</dbReference>
<dbReference type="InterPro" id="IPR000456">
    <property type="entry name" value="Ribosomal_bL17"/>
</dbReference>
<dbReference type="InterPro" id="IPR047859">
    <property type="entry name" value="Ribosomal_bL17_CS"/>
</dbReference>
<dbReference type="InterPro" id="IPR036373">
    <property type="entry name" value="Ribosomal_bL17_sf"/>
</dbReference>
<dbReference type="NCBIfam" id="TIGR00059">
    <property type="entry name" value="L17"/>
    <property type="match status" value="1"/>
</dbReference>
<dbReference type="PANTHER" id="PTHR14413:SF16">
    <property type="entry name" value="LARGE RIBOSOMAL SUBUNIT PROTEIN BL17M"/>
    <property type="match status" value="1"/>
</dbReference>
<dbReference type="PANTHER" id="PTHR14413">
    <property type="entry name" value="RIBOSOMAL PROTEIN L17"/>
    <property type="match status" value="1"/>
</dbReference>
<dbReference type="Pfam" id="PF01196">
    <property type="entry name" value="Ribosomal_L17"/>
    <property type="match status" value="1"/>
</dbReference>
<dbReference type="SUPFAM" id="SSF64263">
    <property type="entry name" value="Prokaryotic ribosomal protein L17"/>
    <property type="match status" value="1"/>
</dbReference>
<dbReference type="PROSITE" id="PS01167">
    <property type="entry name" value="RIBOSOMAL_L17"/>
    <property type="match status" value="1"/>
</dbReference>
<comment type="subunit">
    <text evidence="1">Part of the 50S ribosomal subunit. Contacts protein L32.</text>
</comment>
<comment type="similarity">
    <text evidence="1">Belongs to the bacterial ribosomal protein bL17 family.</text>
</comment>
<evidence type="ECO:0000255" key="1">
    <source>
        <dbReference type="HAMAP-Rule" id="MF_01368"/>
    </source>
</evidence>
<evidence type="ECO:0000305" key="2"/>
<proteinExistence type="inferred from homology"/>